<reference key="1">
    <citation type="journal article" date="2000" name="Nature">
        <title>DNA sequence of both chromosomes of the cholera pathogen Vibrio cholerae.</title>
        <authorList>
            <person name="Heidelberg J.F."/>
            <person name="Eisen J.A."/>
            <person name="Nelson W.C."/>
            <person name="Clayton R.A."/>
            <person name="Gwinn M.L."/>
            <person name="Dodson R.J."/>
            <person name="Haft D.H."/>
            <person name="Hickey E.K."/>
            <person name="Peterson J.D."/>
            <person name="Umayam L.A."/>
            <person name="Gill S.R."/>
            <person name="Nelson K.E."/>
            <person name="Read T.D."/>
            <person name="Tettelin H."/>
            <person name="Richardson D.L."/>
            <person name="Ermolaeva M.D."/>
            <person name="Vamathevan J.J."/>
            <person name="Bass S."/>
            <person name="Qin H."/>
            <person name="Dragoi I."/>
            <person name="Sellers P."/>
            <person name="McDonald L.A."/>
            <person name="Utterback T.R."/>
            <person name="Fleischmann R.D."/>
            <person name="Nierman W.C."/>
            <person name="White O."/>
            <person name="Salzberg S.L."/>
            <person name="Smith H.O."/>
            <person name="Colwell R.R."/>
            <person name="Mekalanos J.J."/>
            <person name="Venter J.C."/>
            <person name="Fraser C.M."/>
        </authorList>
    </citation>
    <scope>NUCLEOTIDE SEQUENCE [LARGE SCALE GENOMIC DNA]</scope>
    <source>
        <strain>ATCC 39315 / El Tor Inaba N16961</strain>
    </source>
</reference>
<dbReference type="EMBL" id="AE003852">
    <property type="protein sequence ID" value="AAF93192.1"/>
    <property type="molecule type" value="Genomic_DNA"/>
</dbReference>
<dbReference type="PIR" id="G82376">
    <property type="entry name" value="G82376"/>
</dbReference>
<dbReference type="RefSeq" id="NP_062598.1">
    <property type="nucleotide sequence ID" value="NC_002505.1"/>
</dbReference>
<dbReference type="RefSeq" id="WP_001884355.1">
    <property type="nucleotide sequence ID" value="NZ_LT906614.1"/>
</dbReference>
<dbReference type="SMR" id="Q9KVX4"/>
<dbReference type="STRING" id="243277.VC_0014"/>
<dbReference type="DNASU" id="2615704"/>
<dbReference type="EnsemblBacteria" id="AAF93192">
    <property type="protein sequence ID" value="AAF93192"/>
    <property type="gene ID" value="VC_0014"/>
</dbReference>
<dbReference type="GeneID" id="89513096"/>
<dbReference type="KEGG" id="vch:VC_0014"/>
<dbReference type="PATRIC" id="fig|243277.26.peg.13"/>
<dbReference type="eggNOG" id="COG1195">
    <property type="taxonomic scope" value="Bacteria"/>
</dbReference>
<dbReference type="HOGENOM" id="CLU_040267_0_0_6"/>
<dbReference type="Proteomes" id="UP000000584">
    <property type="component" value="Chromosome 1"/>
</dbReference>
<dbReference type="GO" id="GO:0005737">
    <property type="term" value="C:cytoplasm"/>
    <property type="evidence" value="ECO:0007669"/>
    <property type="project" value="UniProtKB-SubCell"/>
</dbReference>
<dbReference type="GO" id="GO:0005524">
    <property type="term" value="F:ATP binding"/>
    <property type="evidence" value="ECO:0007669"/>
    <property type="project" value="UniProtKB-UniRule"/>
</dbReference>
<dbReference type="GO" id="GO:0003697">
    <property type="term" value="F:single-stranded DNA binding"/>
    <property type="evidence" value="ECO:0007669"/>
    <property type="project" value="UniProtKB-UniRule"/>
</dbReference>
<dbReference type="GO" id="GO:0006260">
    <property type="term" value="P:DNA replication"/>
    <property type="evidence" value="ECO:0007669"/>
    <property type="project" value="UniProtKB-UniRule"/>
</dbReference>
<dbReference type="GO" id="GO:0000731">
    <property type="term" value="P:DNA synthesis involved in DNA repair"/>
    <property type="evidence" value="ECO:0000318"/>
    <property type="project" value="GO_Central"/>
</dbReference>
<dbReference type="GO" id="GO:0006302">
    <property type="term" value="P:double-strand break repair"/>
    <property type="evidence" value="ECO:0000318"/>
    <property type="project" value="GO_Central"/>
</dbReference>
<dbReference type="GO" id="GO:0009432">
    <property type="term" value="P:SOS response"/>
    <property type="evidence" value="ECO:0007669"/>
    <property type="project" value="UniProtKB-UniRule"/>
</dbReference>
<dbReference type="FunFam" id="1.20.1050.90:FF:000001">
    <property type="entry name" value="DNA replication and repair protein RecF"/>
    <property type="match status" value="1"/>
</dbReference>
<dbReference type="Gene3D" id="3.40.50.300">
    <property type="entry name" value="P-loop containing nucleotide triphosphate hydrolases"/>
    <property type="match status" value="1"/>
</dbReference>
<dbReference type="Gene3D" id="1.20.1050.90">
    <property type="entry name" value="RecF/RecN/SMC, N-terminal domain"/>
    <property type="match status" value="1"/>
</dbReference>
<dbReference type="HAMAP" id="MF_00365">
    <property type="entry name" value="RecF"/>
    <property type="match status" value="1"/>
</dbReference>
<dbReference type="InterPro" id="IPR001238">
    <property type="entry name" value="DNA-binding_RecF"/>
</dbReference>
<dbReference type="InterPro" id="IPR018078">
    <property type="entry name" value="DNA-binding_RecF_CS"/>
</dbReference>
<dbReference type="InterPro" id="IPR027417">
    <property type="entry name" value="P-loop_NTPase"/>
</dbReference>
<dbReference type="InterPro" id="IPR003395">
    <property type="entry name" value="RecF/RecN/SMC_N"/>
</dbReference>
<dbReference type="InterPro" id="IPR042174">
    <property type="entry name" value="RecF_2"/>
</dbReference>
<dbReference type="NCBIfam" id="TIGR00611">
    <property type="entry name" value="recf"/>
    <property type="match status" value="1"/>
</dbReference>
<dbReference type="PANTHER" id="PTHR32182">
    <property type="entry name" value="DNA REPLICATION AND REPAIR PROTEIN RECF"/>
    <property type="match status" value="1"/>
</dbReference>
<dbReference type="PANTHER" id="PTHR32182:SF0">
    <property type="entry name" value="DNA REPLICATION AND REPAIR PROTEIN RECF"/>
    <property type="match status" value="1"/>
</dbReference>
<dbReference type="Pfam" id="PF02463">
    <property type="entry name" value="SMC_N"/>
    <property type="match status" value="1"/>
</dbReference>
<dbReference type="SUPFAM" id="SSF52540">
    <property type="entry name" value="P-loop containing nucleoside triphosphate hydrolases"/>
    <property type="match status" value="1"/>
</dbReference>
<dbReference type="PROSITE" id="PS00617">
    <property type="entry name" value="RECF_1"/>
    <property type="match status" value="1"/>
</dbReference>
<dbReference type="PROSITE" id="PS00618">
    <property type="entry name" value="RECF_2"/>
    <property type="match status" value="1"/>
</dbReference>
<accession>Q9KVX4</accession>
<comment type="function">
    <text evidence="1">The RecF protein is involved in DNA metabolism; it is required for DNA replication and normal SOS inducibility. RecF binds preferentially to single-stranded, linear DNA. It also seems to bind ATP (By similarity).</text>
</comment>
<comment type="subcellular location">
    <subcellularLocation>
        <location evidence="1">Cytoplasm</location>
    </subcellularLocation>
</comment>
<comment type="similarity">
    <text evidence="3">Belongs to the RecF family.</text>
</comment>
<feature type="chain" id="PRO_0000196485" description="DNA replication and repair protein RecF">
    <location>
        <begin position="1"/>
        <end position="363"/>
    </location>
</feature>
<feature type="binding site" evidence="2">
    <location>
        <begin position="30"/>
        <end position="37"/>
    </location>
    <ligand>
        <name>ATP</name>
        <dbReference type="ChEBI" id="CHEBI:30616"/>
    </ligand>
</feature>
<proteinExistence type="inferred from homology"/>
<protein>
    <recommendedName>
        <fullName>DNA replication and repair protein RecF</fullName>
    </recommendedName>
</protein>
<sequence>MPLSRLMIQQFRNIKACDIRLSAGFNFLIGPNGSGKTSVLEAIYLLGHGRSFKSSLTGRIIQNECSELFVHGRICEHSLSSDQFELPVGINKQRDGSTEVKIGGQTGQKLAQLAQILPLQLIHPEGFELLTDGPKQRRAFIDWGVFHTEPAFFDAWGRFKRLSKQRNALLKSAQSYRELSYWDQELARLAEQIDQWRESYVNQLKNVAEQLCRTFLPEFDIDLKYYRGWEKDQPYQSILEKNFERDQQLGYTFSGPNKADLRIKVNATPVEDVLSRGQLKLMVCALRVAQGQHLTELTGKQCIYLIDDFASELDSLRRQRLADSLKGTGAQVFVSSITESQVADMLDESSKTFHVAHGVIEQG</sequence>
<gene>
    <name type="primary">recF</name>
    <name type="ordered locus">VC_0014</name>
</gene>
<name>RECF_VIBCH</name>
<keyword id="KW-0067">ATP-binding</keyword>
<keyword id="KW-0963">Cytoplasm</keyword>
<keyword id="KW-0227">DNA damage</keyword>
<keyword id="KW-0234">DNA repair</keyword>
<keyword id="KW-0235">DNA replication</keyword>
<keyword id="KW-0238">DNA-binding</keyword>
<keyword id="KW-0547">Nucleotide-binding</keyword>
<keyword id="KW-1185">Reference proteome</keyword>
<keyword id="KW-0742">SOS response</keyword>
<evidence type="ECO:0000250" key="1"/>
<evidence type="ECO:0000255" key="2"/>
<evidence type="ECO:0000305" key="3"/>
<organism>
    <name type="scientific">Vibrio cholerae serotype O1 (strain ATCC 39315 / El Tor Inaba N16961)</name>
    <dbReference type="NCBI Taxonomy" id="243277"/>
    <lineage>
        <taxon>Bacteria</taxon>
        <taxon>Pseudomonadati</taxon>
        <taxon>Pseudomonadota</taxon>
        <taxon>Gammaproteobacteria</taxon>
        <taxon>Vibrionales</taxon>
        <taxon>Vibrionaceae</taxon>
        <taxon>Vibrio</taxon>
    </lineage>
</organism>